<feature type="chain" id="PRO_1000052274" description="Large ribosomal subunit protein uL24">
    <location>
        <begin position="1"/>
        <end position="106"/>
    </location>
</feature>
<gene>
    <name evidence="1" type="primary">rplX</name>
    <name type="ordered locus">Pnap_0331</name>
</gene>
<protein>
    <recommendedName>
        <fullName evidence="1">Large ribosomal subunit protein uL24</fullName>
    </recommendedName>
    <alternativeName>
        <fullName evidence="2">50S ribosomal protein L24</fullName>
    </alternativeName>
</protein>
<name>RL24_POLNA</name>
<dbReference type="EMBL" id="CP000529">
    <property type="protein sequence ID" value="ABM35654.1"/>
    <property type="molecule type" value="Genomic_DNA"/>
</dbReference>
<dbReference type="RefSeq" id="WP_011799760.1">
    <property type="nucleotide sequence ID" value="NC_008781.1"/>
</dbReference>
<dbReference type="SMR" id="A1VJ26"/>
<dbReference type="STRING" id="365044.Pnap_0331"/>
<dbReference type="KEGG" id="pna:Pnap_0331"/>
<dbReference type="eggNOG" id="COG0198">
    <property type="taxonomic scope" value="Bacteria"/>
</dbReference>
<dbReference type="HOGENOM" id="CLU_093315_2_2_4"/>
<dbReference type="OrthoDB" id="9807419at2"/>
<dbReference type="Proteomes" id="UP000000644">
    <property type="component" value="Chromosome"/>
</dbReference>
<dbReference type="GO" id="GO:1990904">
    <property type="term" value="C:ribonucleoprotein complex"/>
    <property type="evidence" value="ECO:0007669"/>
    <property type="project" value="UniProtKB-KW"/>
</dbReference>
<dbReference type="GO" id="GO:0005840">
    <property type="term" value="C:ribosome"/>
    <property type="evidence" value="ECO:0007669"/>
    <property type="project" value="UniProtKB-KW"/>
</dbReference>
<dbReference type="GO" id="GO:0019843">
    <property type="term" value="F:rRNA binding"/>
    <property type="evidence" value="ECO:0007669"/>
    <property type="project" value="UniProtKB-UniRule"/>
</dbReference>
<dbReference type="GO" id="GO:0003735">
    <property type="term" value="F:structural constituent of ribosome"/>
    <property type="evidence" value="ECO:0007669"/>
    <property type="project" value="InterPro"/>
</dbReference>
<dbReference type="GO" id="GO:0006412">
    <property type="term" value="P:translation"/>
    <property type="evidence" value="ECO:0007669"/>
    <property type="project" value="UniProtKB-UniRule"/>
</dbReference>
<dbReference type="CDD" id="cd06089">
    <property type="entry name" value="KOW_RPL26"/>
    <property type="match status" value="1"/>
</dbReference>
<dbReference type="FunFam" id="2.30.30.30:FF:000004">
    <property type="entry name" value="50S ribosomal protein L24"/>
    <property type="match status" value="1"/>
</dbReference>
<dbReference type="Gene3D" id="2.30.30.30">
    <property type="match status" value="1"/>
</dbReference>
<dbReference type="HAMAP" id="MF_01326_B">
    <property type="entry name" value="Ribosomal_uL24_B"/>
    <property type="match status" value="1"/>
</dbReference>
<dbReference type="InterPro" id="IPR014722">
    <property type="entry name" value="Rib_uL2_dom2"/>
</dbReference>
<dbReference type="InterPro" id="IPR003256">
    <property type="entry name" value="Ribosomal_uL24"/>
</dbReference>
<dbReference type="InterPro" id="IPR005825">
    <property type="entry name" value="Ribosomal_uL24_CS"/>
</dbReference>
<dbReference type="InterPro" id="IPR041988">
    <property type="entry name" value="Ribosomal_uL24_KOW"/>
</dbReference>
<dbReference type="InterPro" id="IPR008991">
    <property type="entry name" value="Translation_prot_SH3-like_sf"/>
</dbReference>
<dbReference type="NCBIfam" id="TIGR01079">
    <property type="entry name" value="rplX_bact"/>
    <property type="match status" value="1"/>
</dbReference>
<dbReference type="PANTHER" id="PTHR12903">
    <property type="entry name" value="MITOCHONDRIAL RIBOSOMAL PROTEIN L24"/>
    <property type="match status" value="1"/>
</dbReference>
<dbReference type="Pfam" id="PF17136">
    <property type="entry name" value="ribosomal_L24"/>
    <property type="match status" value="1"/>
</dbReference>
<dbReference type="SUPFAM" id="SSF50104">
    <property type="entry name" value="Translation proteins SH3-like domain"/>
    <property type="match status" value="1"/>
</dbReference>
<dbReference type="PROSITE" id="PS01108">
    <property type="entry name" value="RIBOSOMAL_L24"/>
    <property type="match status" value="1"/>
</dbReference>
<comment type="function">
    <text evidence="1">One of two assembly initiator proteins, it binds directly to the 5'-end of the 23S rRNA, where it nucleates assembly of the 50S subunit.</text>
</comment>
<comment type="function">
    <text evidence="1">One of the proteins that surrounds the polypeptide exit tunnel on the outside of the subunit.</text>
</comment>
<comment type="subunit">
    <text evidence="1">Part of the 50S ribosomal subunit.</text>
</comment>
<comment type="similarity">
    <text evidence="1">Belongs to the universal ribosomal protein uL24 family.</text>
</comment>
<accession>A1VJ26</accession>
<sequence>MNKIRKGDEIIVITGRDKGKRGTISLRVDDSYVLVDGINLVKKHTKPNPLKGTTGGIVEKSMPIHQSNVAIFNAASGKADRVGIKLLADGKKTRVFKSSGEEIKAA</sequence>
<organism>
    <name type="scientific">Polaromonas naphthalenivorans (strain CJ2)</name>
    <dbReference type="NCBI Taxonomy" id="365044"/>
    <lineage>
        <taxon>Bacteria</taxon>
        <taxon>Pseudomonadati</taxon>
        <taxon>Pseudomonadota</taxon>
        <taxon>Betaproteobacteria</taxon>
        <taxon>Burkholderiales</taxon>
        <taxon>Comamonadaceae</taxon>
        <taxon>Polaromonas</taxon>
    </lineage>
</organism>
<reference key="1">
    <citation type="journal article" date="2009" name="Environ. Microbiol.">
        <title>The genome of Polaromonas naphthalenivorans strain CJ2, isolated from coal tar-contaminated sediment, reveals physiological and metabolic versatility and evolution through extensive horizontal gene transfer.</title>
        <authorList>
            <person name="Yagi J.M."/>
            <person name="Sims D."/>
            <person name="Brettin T."/>
            <person name="Bruce D."/>
            <person name="Madsen E.L."/>
        </authorList>
    </citation>
    <scope>NUCLEOTIDE SEQUENCE [LARGE SCALE GENOMIC DNA]</scope>
    <source>
        <strain>CJ2</strain>
    </source>
</reference>
<evidence type="ECO:0000255" key="1">
    <source>
        <dbReference type="HAMAP-Rule" id="MF_01326"/>
    </source>
</evidence>
<evidence type="ECO:0000305" key="2"/>
<proteinExistence type="inferred from homology"/>
<keyword id="KW-1185">Reference proteome</keyword>
<keyword id="KW-0687">Ribonucleoprotein</keyword>
<keyword id="KW-0689">Ribosomal protein</keyword>
<keyword id="KW-0694">RNA-binding</keyword>
<keyword id="KW-0699">rRNA-binding</keyword>